<dbReference type="EMBL" id="CH473985">
    <property type="protein sequence ID" value="EDL95033.1"/>
    <property type="molecule type" value="Genomic_DNA"/>
</dbReference>
<dbReference type="EMBL" id="BC088248">
    <property type="protein sequence ID" value="AAH88248.1"/>
    <property type="molecule type" value="mRNA"/>
</dbReference>
<dbReference type="RefSeq" id="NP_001009632.1">
    <property type="nucleotide sequence ID" value="NM_001009632.1"/>
</dbReference>
<dbReference type="FunCoup" id="Q5M840">
    <property type="interactions" value="193"/>
</dbReference>
<dbReference type="STRING" id="10116.ENSRNOP00000007879"/>
<dbReference type="PhosphoSitePlus" id="Q5M840"/>
<dbReference type="PaxDb" id="10116-ENSRNOP00000007879"/>
<dbReference type="Ensembl" id="ENSRNOT00000007879.5">
    <property type="protein sequence ID" value="ENSRNOP00000007879.3"/>
    <property type="gene ID" value="ENSRNOG00000006019.5"/>
</dbReference>
<dbReference type="GeneID" id="289388"/>
<dbReference type="KEGG" id="rno:289388"/>
<dbReference type="AGR" id="RGD:1311675"/>
<dbReference type="CTD" id="50486"/>
<dbReference type="RGD" id="1311675">
    <property type="gene designation" value="G0s2"/>
</dbReference>
<dbReference type="eggNOG" id="ENOG502S7WP">
    <property type="taxonomic scope" value="Eukaryota"/>
</dbReference>
<dbReference type="GeneTree" id="ENSGT00390000005294"/>
<dbReference type="HOGENOM" id="CLU_138623_0_0_1"/>
<dbReference type="InParanoid" id="Q5M840"/>
<dbReference type="OMA" id="CEQQSLH"/>
<dbReference type="OrthoDB" id="9373743at2759"/>
<dbReference type="PhylomeDB" id="Q5M840"/>
<dbReference type="TreeFam" id="TF336218"/>
<dbReference type="PRO" id="PR:Q5M840"/>
<dbReference type="Proteomes" id="UP000002494">
    <property type="component" value="Chromosome 13"/>
</dbReference>
<dbReference type="Proteomes" id="UP000234681">
    <property type="component" value="Chromosome 13"/>
</dbReference>
<dbReference type="Bgee" id="ENSRNOG00000006019">
    <property type="expression patterns" value="Expressed in liver and 19 other cell types or tissues"/>
</dbReference>
<dbReference type="GO" id="GO:0005739">
    <property type="term" value="C:mitochondrion"/>
    <property type="evidence" value="ECO:0000250"/>
    <property type="project" value="UniProtKB"/>
</dbReference>
<dbReference type="GO" id="GO:0097191">
    <property type="term" value="P:extrinsic apoptotic signaling pathway"/>
    <property type="evidence" value="ECO:0000250"/>
    <property type="project" value="UniProtKB"/>
</dbReference>
<dbReference type="GO" id="GO:0120162">
    <property type="term" value="P:positive regulation of cold-induced thermogenesis"/>
    <property type="evidence" value="ECO:0000250"/>
    <property type="project" value="YuBioLab"/>
</dbReference>
<dbReference type="GO" id="GO:2001238">
    <property type="term" value="P:positive regulation of extrinsic apoptotic signaling pathway"/>
    <property type="evidence" value="ECO:0000250"/>
    <property type="project" value="UniProtKB"/>
</dbReference>
<dbReference type="InterPro" id="IPR016821">
    <property type="entry name" value="G0S2"/>
</dbReference>
<dbReference type="PANTHER" id="PTHR15570">
    <property type="entry name" value="G0/G1 SWITCH PROTEIN 2"/>
    <property type="match status" value="1"/>
</dbReference>
<dbReference type="PANTHER" id="PTHR15570:SF2">
    <property type="entry name" value="G0_G1 SWITCH PROTEIN 2"/>
    <property type="match status" value="1"/>
</dbReference>
<dbReference type="Pfam" id="PF15103">
    <property type="entry name" value="G0-G1_switch_2"/>
    <property type="match status" value="1"/>
</dbReference>
<dbReference type="PIRSF" id="PIRSF023925">
    <property type="entry name" value="G0/G1_switch_p2"/>
    <property type="match status" value="1"/>
</dbReference>
<organism>
    <name type="scientific">Rattus norvegicus</name>
    <name type="common">Rat</name>
    <dbReference type="NCBI Taxonomy" id="10116"/>
    <lineage>
        <taxon>Eukaryota</taxon>
        <taxon>Metazoa</taxon>
        <taxon>Chordata</taxon>
        <taxon>Craniata</taxon>
        <taxon>Vertebrata</taxon>
        <taxon>Euteleostomi</taxon>
        <taxon>Mammalia</taxon>
        <taxon>Eutheria</taxon>
        <taxon>Euarchontoglires</taxon>
        <taxon>Glires</taxon>
        <taxon>Rodentia</taxon>
        <taxon>Myomorpha</taxon>
        <taxon>Muroidea</taxon>
        <taxon>Muridae</taxon>
        <taxon>Murinae</taxon>
        <taxon>Rattus</taxon>
    </lineage>
</organism>
<proteinExistence type="inferred from homology"/>
<feature type="chain" id="PRO_0000416594" description="G0/G1 switch protein 2">
    <location>
        <begin position="1"/>
        <end position="103"/>
    </location>
</feature>
<accession>Q5M840</accession>
<protein>
    <recommendedName>
        <fullName>G0/G1 switch protein 2</fullName>
    </recommendedName>
    <alternativeName>
        <fullName>G0S2-like protein</fullName>
    </alternativeName>
</protein>
<reference key="1">
    <citation type="submission" date="2005-07" db="EMBL/GenBank/DDBJ databases">
        <authorList>
            <person name="Mural R.J."/>
            <person name="Adams M.D."/>
            <person name="Myers E.W."/>
            <person name="Smith H.O."/>
            <person name="Venter J.C."/>
        </authorList>
    </citation>
    <scope>NUCLEOTIDE SEQUENCE [LARGE SCALE GENOMIC DNA]</scope>
</reference>
<reference key="2">
    <citation type="journal article" date="2004" name="Genome Res.">
        <title>The status, quality, and expansion of the NIH full-length cDNA project: the Mammalian Gene Collection (MGC).</title>
        <authorList>
            <consortium name="The MGC Project Team"/>
        </authorList>
    </citation>
    <scope>NUCLEOTIDE SEQUENCE [LARGE SCALE MRNA]</scope>
    <source>
        <tissue>Liver</tissue>
    </source>
</reference>
<sequence>MESVQELIPLAKEMMTQKSRGKLVKLYVLGSVLAFFGVVLGLVETVCSPFTAASRLRDQEAAVAELRDACEQQSLHKQALIAEGKTQEATLCSRALSLRQHAS</sequence>
<name>G0S2_RAT</name>
<keyword id="KW-0053">Apoptosis</keyword>
<keyword id="KW-0131">Cell cycle</keyword>
<keyword id="KW-0496">Mitochondrion</keyword>
<keyword id="KW-1185">Reference proteome</keyword>
<comment type="function">
    <text evidence="1">Promotes apoptosis by binding to BCL2, hence preventing the formation of protective BCL2-BAX heterodimers.</text>
</comment>
<comment type="subunit">
    <text evidence="1">Directly interacts with BCL2; this interaction prevents the formation of the anti-apoptotic BAX-BCL2 complex.</text>
</comment>
<comment type="subcellular location">
    <subcellularLocation>
        <location evidence="1">Mitochondrion</location>
    </subcellularLocation>
</comment>
<gene>
    <name type="primary">G0s2</name>
</gene>
<evidence type="ECO:0000250" key="1"/>